<accession>P0A7R8</accession>
<accession>P02364</accession>
<evidence type="ECO:0000255" key="1">
    <source>
        <dbReference type="HAMAP-Rule" id="MF_00508"/>
    </source>
</evidence>
<evidence type="ECO:0000305" key="2"/>
<gene>
    <name evidence="1" type="primary">rpsJ</name>
    <name type="synonym">nusE</name>
    <name type="ordered locus">SF3353</name>
    <name type="ordered locus">S4409</name>
</gene>
<proteinExistence type="inferred from homology"/>
<name>RS10_SHIFL</name>
<dbReference type="EMBL" id="AE005674">
    <property type="protein sequence ID" value="AAN44816.1"/>
    <property type="molecule type" value="Genomic_DNA"/>
</dbReference>
<dbReference type="EMBL" id="AE014073">
    <property type="protein sequence ID" value="AAP19360.1"/>
    <property type="molecule type" value="Genomic_DNA"/>
</dbReference>
<dbReference type="RefSeq" id="NP_709109.1">
    <property type="nucleotide sequence ID" value="NC_004337.2"/>
</dbReference>
<dbReference type="RefSeq" id="WP_001181004.1">
    <property type="nucleotide sequence ID" value="NZ_WPGW01000088.1"/>
</dbReference>
<dbReference type="SMR" id="P0A7R8"/>
<dbReference type="STRING" id="198214.SF3353"/>
<dbReference type="PaxDb" id="198214-SF3353"/>
<dbReference type="GeneID" id="1027009"/>
<dbReference type="GeneID" id="93778666"/>
<dbReference type="KEGG" id="sfl:SF3353"/>
<dbReference type="KEGG" id="sfx:S4409"/>
<dbReference type="PATRIC" id="fig|198214.7.peg.3962"/>
<dbReference type="HOGENOM" id="CLU_122625_1_3_6"/>
<dbReference type="Proteomes" id="UP000001006">
    <property type="component" value="Chromosome"/>
</dbReference>
<dbReference type="Proteomes" id="UP000002673">
    <property type="component" value="Chromosome"/>
</dbReference>
<dbReference type="GO" id="GO:1990904">
    <property type="term" value="C:ribonucleoprotein complex"/>
    <property type="evidence" value="ECO:0007669"/>
    <property type="project" value="UniProtKB-KW"/>
</dbReference>
<dbReference type="GO" id="GO:0005840">
    <property type="term" value="C:ribosome"/>
    <property type="evidence" value="ECO:0007669"/>
    <property type="project" value="UniProtKB-KW"/>
</dbReference>
<dbReference type="GO" id="GO:0003735">
    <property type="term" value="F:structural constituent of ribosome"/>
    <property type="evidence" value="ECO:0007669"/>
    <property type="project" value="InterPro"/>
</dbReference>
<dbReference type="GO" id="GO:0000049">
    <property type="term" value="F:tRNA binding"/>
    <property type="evidence" value="ECO:0007669"/>
    <property type="project" value="UniProtKB-UniRule"/>
</dbReference>
<dbReference type="GO" id="GO:0006412">
    <property type="term" value="P:translation"/>
    <property type="evidence" value="ECO:0007669"/>
    <property type="project" value="UniProtKB-UniRule"/>
</dbReference>
<dbReference type="FunFam" id="3.30.70.600:FF:000001">
    <property type="entry name" value="30S ribosomal protein S10"/>
    <property type="match status" value="1"/>
</dbReference>
<dbReference type="Gene3D" id="3.30.70.600">
    <property type="entry name" value="Ribosomal protein S10 domain"/>
    <property type="match status" value="1"/>
</dbReference>
<dbReference type="HAMAP" id="MF_00508">
    <property type="entry name" value="Ribosomal_uS10"/>
    <property type="match status" value="1"/>
</dbReference>
<dbReference type="InterPro" id="IPR001848">
    <property type="entry name" value="Ribosomal_uS10"/>
</dbReference>
<dbReference type="InterPro" id="IPR018268">
    <property type="entry name" value="Ribosomal_uS10_CS"/>
</dbReference>
<dbReference type="InterPro" id="IPR027486">
    <property type="entry name" value="Ribosomal_uS10_dom"/>
</dbReference>
<dbReference type="InterPro" id="IPR036838">
    <property type="entry name" value="Ribosomal_uS10_dom_sf"/>
</dbReference>
<dbReference type="NCBIfam" id="NF001861">
    <property type="entry name" value="PRK00596.1"/>
    <property type="match status" value="1"/>
</dbReference>
<dbReference type="NCBIfam" id="TIGR01049">
    <property type="entry name" value="rpsJ_bact"/>
    <property type="match status" value="1"/>
</dbReference>
<dbReference type="PANTHER" id="PTHR11700">
    <property type="entry name" value="30S RIBOSOMAL PROTEIN S10 FAMILY MEMBER"/>
    <property type="match status" value="1"/>
</dbReference>
<dbReference type="Pfam" id="PF00338">
    <property type="entry name" value="Ribosomal_S10"/>
    <property type="match status" value="1"/>
</dbReference>
<dbReference type="PRINTS" id="PR00971">
    <property type="entry name" value="RIBOSOMALS10"/>
</dbReference>
<dbReference type="SMART" id="SM01403">
    <property type="entry name" value="Ribosomal_S10"/>
    <property type="match status" value="1"/>
</dbReference>
<dbReference type="SUPFAM" id="SSF54999">
    <property type="entry name" value="Ribosomal protein S10"/>
    <property type="match status" value="1"/>
</dbReference>
<dbReference type="PROSITE" id="PS00361">
    <property type="entry name" value="RIBOSOMAL_S10"/>
    <property type="match status" value="1"/>
</dbReference>
<sequence length="103" mass="11736">MQNQRIRIRLKAFDHRLIDQATAEIVETAKRTGAQVRGPIPLPTRKERFTVLISPHVNKDARDQYEIRTHLRLVDIVEPTEKTVDALMRLDLAAGVDVQISLG</sequence>
<reference key="1">
    <citation type="journal article" date="2002" name="Nucleic Acids Res.">
        <title>Genome sequence of Shigella flexneri 2a: insights into pathogenicity through comparison with genomes of Escherichia coli K12 and O157.</title>
        <authorList>
            <person name="Jin Q."/>
            <person name="Yuan Z."/>
            <person name="Xu J."/>
            <person name="Wang Y."/>
            <person name="Shen Y."/>
            <person name="Lu W."/>
            <person name="Wang J."/>
            <person name="Liu H."/>
            <person name="Yang J."/>
            <person name="Yang F."/>
            <person name="Zhang X."/>
            <person name="Zhang J."/>
            <person name="Yang G."/>
            <person name="Wu H."/>
            <person name="Qu D."/>
            <person name="Dong J."/>
            <person name="Sun L."/>
            <person name="Xue Y."/>
            <person name="Zhao A."/>
            <person name="Gao Y."/>
            <person name="Zhu J."/>
            <person name="Kan B."/>
            <person name="Ding K."/>
            <person name="Chen S."/>
            <person name="Cheng H."/>
            <person name="Yao Z."/>
            <person name="He B."/>
            <person name="Chen R."/>
            <person name="Ma D."/>
            <person name="Qiang B."/>
            <person name="Wen Y."/>
            <person name="Hou Y."/>
            <person name="Yu J."/>
        </authorList>
    </citation>
    <scope>NUCLEOTIDE SEQUENCE [LARGE SCALE GENOMIC DNA]</scope>
    <source>
        <strain>301 / Serotype 2a</strain>
    </source>
</reference>
<reference key="2">
    <citation type="journal article" date="2003" name="Infect. Immun.">
        <title>Complete genome sequence and comparative genomics of Shigella flexneri serotype 2a strain 2457T.</title>
        <authorList>
            <person name="Wei J."/>
            <person name="Goldberg M.B."/>
            <person name="Burland V."/>
            <person name="Venkatesan M.M."/>
            <person name="Deng W."/>
            <person name="Fournier G."/>
            <person name="Mayhew G.F."/>
            <person name="Plunkett G. III"/>
            <person name="Rose D.J."/>
            <person name="Darling A."/>
            <person name="Mau B."/>
            <person name="Perna N.T."/>
            <person name="Payne S.M."/>
            <person name="Runyen-Janecky L.J."/>
            <person name="Zhou S."/>
            <person name="Schwartz D.C."/>
            <person name="Blattner F.R."/>
        </authorList>
    </citation>
    <scope>NUCLEOTIDE SEQUENCE [LARGE SCALE GENOMIC DNA]</scope>
    <source>
        <strain>ATCC 700930 / 2457T / Serotype 2a</strain>
    </source>
</reference>
<keyword id="KW-1185">Reference proteome</keyword>
<keyword id="KW-0687">Ribonucleoprotein</keyword>
<keyword id="KW-0689">Ribosomal protein</keyword>
<feature type="chain" id="PRO_0000146592" description="Small ribosomal subunit protein uS10">
    <location>
        <begin position="1"/>
        <end position="103"/>
    </location>
</feature>
<comment type="function">
    <text evidence="1">Involved in the binding of tRNA to the ribosomes.</text>
</comment>
<comment type="subunit">
    <text evidence="1">Part of the 30S ribosomal subunit.</text>
</comment>
<comment type="similarity">
    <text evidence="1">Belongs to the universal ribosomal protein uS10 family.</text>
</comment>
<protein>
    <recommendedName>
        <fullName evidence="1">Small ribosomal subunit protein uS10</fullName>
    </recommendedName>
    <alternativeName>
        <fullName evidence="2">30S ribosomal protein S10</fullName>
    </alternativeName>
</protein>
<organism>
    <name type="scientific">Shigella flexneri</name>
    <dbReference type="NCBI Taxonomy" id="623"/>
    <lineage>
        <taxon>Bacteria</taxon>
        <taxon>Pseudomonadati</taxon>
        <taxon>Pseudomonadota</taxon>
        <taxon>Gammaproteobacteria</taxon>
        <taxon>Enterobacterales</taxon>
        <taxon>Enterobacteriaceae</taxon>
        <taxon>Shigella</taxon>
    </lineage>
</organism>